<name>FLIW_THEP3</name>
<reference key="1">
    <citation type="submission" date="2008-01" db="EMBL/GenBank/DDBJ databases">
        <title>Complete sequence of Thermoanaerobacter pseudethanolicus 39E.</title>
        <authorList>
            <person name="Copeland A."/>
            <person name="Lucas S."/>
            <person name="Lapidus A."/>
            <person name="Barry K."/>
            <person name="Glavina del Rio T."/>
            <person name="Dalin E."/>
            <person name="Tice H."/>
            <person name="Pitluck S."/>
            <person name="Bruce D."/>
            <person name="Goodwin L."/>
            <person name="Saunders E."/>
            <person name="Brettin T."/>
            <person name="Detter J.C."/>
            <person name="Han C."/>
            <person name="Schmutz J."/>
            <person name="Larimer F."/>
            <person name="Land M."/>
            <person name="Hauser L."/>
            <person name="Kyrpides N."/>
            <person name="Lykidis A."/>
            <person name="Hemme C."/>
            <person name="Fields M.W."/>
            <person name="He Z."/>
            <person name="Zhou J."/>
            <person name="Richardson P."/>
        </authorList>
    </citation>
    <scope>NUCLEOTIDE SEQUENCE [LARGE SCALE GENOMIC DNA]</scope>
    <source>
        <strain>ATCC 33223 / DSM 2355 / 39E</strain>
    </source>
</reference>
<organism>
    <name type="scientific">Thermoanaerobacter pseudethanolicus (strain ATCC 33223 / 39E)</name>
    <name type="common">Clostridium thermohydrosulfuricum</name>
    <dbReference type="NCBI Taxonomy" id="340099"/>
    <lineage>
        <taxon>Bacteria</taxon>
        <taxon>Bacillati</taxon>
        <taxon>Bacillota</taxon>
        <taxon>Clostridia</taxon>
        <taxon>Thermoanaerobacterales</taxon>
        <taxon>Thermoanaerobacteraceae</taxon>
        <taxon>Thermoanaerobacter</taxon>
    </lineage>
</organism>
<feature type="chain" id="PRO_1000138263" description="Flagellar assembly factor FliW">
    <location>
        <begin position="1"/>
        <end position="150"/>
    </location>
</feature>
<evidence type="ECO:0000255" key="1">
    <source>
        <dbReference type="HAMAP-Rule" id="MF_01185"/>
    </source>
</evidence>
<comment type="function">
    <text evidence="1">Acts as an anti-CsrA protein, binds CsrA and prevents it from repressing translation of its target genes, one of which is flagellin. Binds to flagellin and participates in the assembly of the flagellum.</text>
</comment>
<comment type="subunit">
    <text evidence="1">Interacts with translational regulator CsrA and flagellin(s).</text>
</comment>
<comment type="subcellular location">
    <subcellularLocation>
        <location evidence="1">Cytoplasm</location>
    </subcellularLocation>
</comment>
<comment type="similarity">
    <text evidence="1">Belongs to the FliW family.</text>
</comment>
<protein>
    <recommendedName>
        <fullName evidence="1">Flagellar assembly factor FliW</fullName>
    </recommendedName>
</protein>
<keyword id="KW-1005">Bacterial flagellum biogenesis</keyword>
<keyword id="KW-0143">Chaperone</keyword>
<keyword id="KW-0963">Cytoplasm</keyword>
<keyword id="KW-1185">Reference proteome</keyword>
<keyword id="KW-0810">Translation regulation</keyword>
<proteinExistence type="inferred from homology"/>
<gene>
    <name evidence="1" type="primary">fliW</name>
    <name type="ordered locus">Teth39_1781</name>
</gene>
<sequence length="150" mass="17421">MQINTKNFGIIEYNPDDVIYFEEGIPGFEDLHNFLIITDNREDMPFKWLQAIDNTDIAFVVIDPRVFKPNYTFEIDEELIQALQIEDINHLLIYVIVVIPDEIEKMTANLKAPIIINAKNNKGKQAILDNDEYLIKHPILEELKNAYSNA</sequence>
<accession>B0KC64</accession>
<dbReference type="EMBL" id="CP000924">
    <property type="protein sequence ID" value="ABY95418.1"/>
    <property type="molecule type" value="Genomic_DNA"/>
</dbReference>
<dbReference type="RefSeq" id="WP_004400864.1">
    <property type="nucleotide sequence ID" value="NC_010321.1"/>
</dbReference>
<dbReference type="SMR" id="B0KC64"/>
<dbReference type="STRING" id="340099.Teth39_1781"/>
<dbReference type="KEGG" id="tpd:Teth39_1781"/>
<dbReference type="eggNOG" id="COG1699">
    <property type="taxonomic scope" value="Bacteria"/>
</dbReference>
<dbReference type="HOGENOM" id="CLU_112356_0_2_9"/>
<dbReference type="Proteomes" id="UP000002156">
    <property type="component" value="Chromosome"/>
</dbReference>
<dbReference type="GO" id="GO:0005737">
    <property type="term" value="C:cytoplasm"/>
    <property type="evidence" value="ECO:0007669"/>
    <property type="project" value="UniProtKB-SubCell"/>
</dbReference>
<dbReference type="GO" id="GO:0044780">
    <property type="term" value="P:bacterial-type flagellum assembly"/>
    <property type="evidence" value="ECO:0007669"/>
    <property type="project" value="UniProtKB-UniRule"/>
</dbReference>
<dbReference type="GO" id="GO:0006417">
    <property type="term" value="P:regulation of translation"/>
    <property type="evidence" value="ECO:0007669"/>
    <property type="project" value="UniProtKB-KW"/>
</dbReference>
<dbReference type="Gene3D" id="2.30.290.10">
    <property type="entry name" value="BH3618-like"/>
    <property type="match status" value="1"/>
</dbReference>
<dbReference type="HAMAP" id="MF_01185">
    <property type="entry name" value="FliW"/>
    <property type="match status" value="1"/>
</dbReference>
<dbReference type="InterPro" id="IPR003775">
    <property type="entry name" value="Flagellar_assembly_factor_FliW"/>
</dbReference>
<dbReference type="InterPro" id="IPR024046">
    <property type="entry name" value="Flagellar_assmbl_FliW_dom_sf"/>
</dbReference>
<dbReference type="NCBIfam" id="NF009793">
    <property type="entry name" value="PRK13285.1-1"/>
    <property type="match status" value="1"/>
</dbReference>
<dbReference type="PANTHER" id="PTHR39190">
    <property type="entry name" value="FLAGELLAR ASSEMBLY FACTOR FLIW"/>
    <property type="match status" value="1"/>
</dbReference>
<dbReference type="PANTHER" id="PTHR39190:SF1">
    <property type="entry name" value="FLAGELLAR ASSEMBLY FACTOR FLIW"/>
    <property type="match status" value="1"/>
</dbReference>
<dbReference type="Pfam" id="PF02623">
    <property type="entry name" value="FliW"/>
    <property type="match status" value="1"/>
</dbReference>
<dbReference type="SUPFAM" id="SSF141457">
    <property type="entry name" value="BH3618-like"/>
    <property type="match status" value="1"/>
</dbReference>